<keyword id="KW-0997">Cell inner membrane</keyword>
<keyword id="KW-1003">Cell membrane</keyword>
<keyword id="KW-0472">Membrane</keyword>
<keyword id="KW-1185">Reference proteome</keyword>
<keyword id="KW-0812">Transmembrane</keyword>
<keyword id="KW-1133">Transmembrane helix</keyword>
<proteinExistence type="inferred from homology"/>
<accession>Q3Z0Y2</accession>
<evidence type="ECO:0000255" key="1">
    <source>
        <dbReference type="HAMAP-Rule" id="MF_00189"/>
    </source>
</evidence>
<gene>
    <name evidence="1" type="primary">yciB</name>
    <name type="ordered locus">SSON_1912</name>
</gene>
<dbReference type="EMBL" id="CP000038">
    <property type="protein sequence ID" value="AAZ88580.1"/>
    <property type="molecule type" value="Genomic_DNA"/>
</dbReference>
<dbReference type="RefSeq" id="WP_000808667.1">
    <property type="nucleotide sequence ID" value="NC_007384.1"/>
</dbReference>
<dbReference type="KEGG" id="ssn:SSON_1912"/>
<dbReference type="HOGENOM" id="CLU_089554_2_0_6"/>
<dbReference type="Proteomes" id="UP000002529">
    <property type="component" value="Chromosome"/>
</dbReference>
<dbReference type="GO" id="GO:0005886">
    <property type="term" value="C:plasma membrane"/>
    <property type="evidence" value="ECO:0007669"/>
    <property type="project" value="UniProtKB-SubCell"/>
</dbReference>
<dbReference type="HAMAP" id="MF_00189">
    <property type="entry name" value="YciB"/>
    <property type="match status" value="1"/>
</dbReference>
<dbReference type="InterPro" id="IPR006008">
    <property type="entry name" value="YciB"/>
</dbReference>
<dbReference type="NCBIfam" id="TIGR00997">
    <property type="entry name" value="ispZ"/>
    <property type="match status" value="1"/>
</dbReference>
<dbReference type="NCBIfam" id="NF001324">
    <property type="entry name" value="PRK00259.1-2"/>
    <property type="match status" value="1"/>
</dbReference>
<dbReference type="NCBIfam" id="NF001325">
    <property type="entry name" value="PRK00259.1-3"/>
    <property type="match status" value="1"/>
</dbReference>
<dbReference type="NCBIfam" id="NF001326">
    <property type="entry name" value="PRK00259.1-4"/>
    <property type="match status" value="1"/>
</dbReference>
<dbReference type="PANTHER" id="PTHR36917:SF1">
    <property type="entry name" value="INNER MEMBRANE-SPANNING PROTEIN YCIB"/>
    <property type="match status" value="1"/>
</dbReference>
<dbReference type="PANTHER" id="PTHR36917">
    <property type="entry name" value="INTRACELLULAR SEPTATION PROTEIN A-RELATED"/>
    <property type="match status" value="1"/>
</dbReference>
<dbReference type="Pfam" id="PF04279">
    <property type="entry name" value="IspA"/>
    <property type="match status" value="1"/>
</dbReference>
<organism>
    <name type="scientific">Shigella sonnei (strain Ss046)</name>
    <dbReference type="NCBI Taxonomy" id="300269"/>
    <lineage>
        <taxon>Bacteria</taxon>
        <taxon>Pseudomonadati</taxon>
        <taxon>Pseudomonadota</taxon>
        <taxon>Gammaproteobacteria</taxon>
        <taxon>Enterobacterales</taxon>
        <taxon>Enterobacteriaceae</taxon>
        <taxon>Shigella</taxon>
    </lineage>
</organism>
<protein>
    <recommendedName>
        <fullName evidence="1">Inner membrane-spanning protein YciB</fullName>
    </recommendedName>
</protein>
<reference key="1">
    <citation type="journal article" date="2005" name="Nucleic Acids Res.">
        <title>Genome dynamics and diversity of Shigella species, the etiologic agents of bacillary dysentery.</title>
        <authorList>
            <person name="Yang F."/>
            <person name="Yang J."/>
            <person name="Zhang X."/>
            <person name="Chen L."/>
            <person name="Jiang Y."/>
            <person name="Yan Y."/>
            <person name="Tang X."/>
            <person name="Wang J."/>
            <person name="Xiong Z."/>
            <person name="Dong J."/>
            <person name="Xue Y."/>
            <person name="Zhu Y."/>
            <person name="Xu X."/>
            <person name="Sun L."/>
            <person name="Chen S."/>
            <person name="Nie H."/>
            <person name="Peng J."/>
            <person name="Xu J."/>
            <person name="Wang Y."/>
            <person name="Yuan Z."/>
            <person name="Wen Y."/>
            <person name="Yao Z."/>
            <person name="Shen Y."/>
            <person name="Qiang B."/>
            <person name="Hou Y."/>
            <person name="Yu J."/>
            <person name="Jin Q."/>
        </authorList>
    </citation>
    <scope>NUCLEOTIDE SEQUENCE [LARGE SCALE GENOMIC DNA]</scope>
    <source>
        <strain>Ss046</strain>
    </source>
</reference>
<feature type="chain" id="PRO_1000021067" description="Inner membrane-spanning protein YciB">
    <location>
        <begin position="1"/>
        <end position="179"/>
    </location>
</feature>
<feature type="transmembrane region" description="Helical" evidence="1">
    <location>
        <begin position="22"/>
        <end position="42"/>
    </location>
</feature>
<feature type="transmembrane region" description="Helical" evidence="1">
    <location>
        <begin position="50"/>
        <end position="70"/>
    </location>
</feature>
<feature type="transmembrane region" description="Helical" evidence="1">
    <location>
        <begin position="76"/>
        <end position="96"/>
    </location>
</feature>
<feature type="transmembrane region" description="Helical" evidence="1">
    <location>
        <begin position="121"/>
        <end position="141"/>
    </location>
</feature>
<feature type="transmembrane region" description="Helical" evidence="1">
    <location>
        <begin position="149"/>
        <end position="169"/>
    </location>
</feature>
<comment type="function">
    <text evidence="1">Plays a role in cell envelope biogenesis, maintenance of cell envelope integrity and membrane homeostasis.</text>
</comment>
<comment type="subcellular location">
    <subcellularLocation>
        <location evidence="1">Cell inner membrane</location>
        <topology evidence="1">Multi-pass membrane protein</topology>
    </subcellularLocation>
</comment>
<comment type="similarity">
    <text evidence="1">Belongs to the YciB family.</text>
</comment>
<name>YCIB_SHISS</name>
<sequence length="179" mass="20790">MKQFLDFLPLVVFFAFYKIYDIYAATAALIVATAIVLIYSWVRFRKVEKMALITFVLVVVFGGLTLFFHNDEFIKWKVTVIYALFAGALLVSQWVMKKPLIQRMLGKELTLPQPVWSKLNLAWAVFFILCGLANIYIAFWLPQNIWVNFKVFGLTALTLIFTLLSGIYIYRHMPQEDKS</sequence>